<gene>
    <name type="primary">qa-y</name>
</gene>
<feature type="chain" id="PRO_0000260163" description="Quinate permease">
    <location>
        <begin position="1"/>
        <end position="536"/>
    </location>
</feature>
<feature type="topological domain" description="Cytoplasmic" evidence="1">
    <location>
        <begin position="1"/>
        <end position="26"/>
    </location>
</feature>
<feature type="transmembrane region" description="Helical; Name=1" evidence="1">
    <location>
        <begin position="27"/>
        <end position="47"/>
    </location>
</feature>
<feature type="topological domain" description="Extracellular" evidence="1">
    <location>
        <begin position="48"/>
        <end position="74"/>
    </location>
</feature>
<feature type="transmembrane region" description="Helical; Name=2" evidence="1">
    <location>
        <begin position="75"/>
        <end position="95"/>
    </location>
</feature>
<feature type="topological domain" description="Cytoplasmic" evidence="1">
    <location>
        <begin position="96"/>
        <end position="98"/>
    </location>
</feature>
<feature type="transmembrane region" description="Helical; Name=3" evidence="1">
    <location>
        <begin position="99"/>
        <end position="119"/>
    </location>
</feature>
<feature type="topological domain" description="Extracellular" evidence="1">
    <location>
        <begin position="120"/>
        <end position="131"/>
    </location>
</feature>
<feature type="transmembrane region" description="Helical; Name=4" evidence="1">
    <location>
        <begin position="132"/>
        <end position="152"/>
    </location>
</feature>
<feature type="topological domain" description="Cytoplasmic" evidence="1">
    <location>
        <begin position="153"/>
        <end position="160"/>
    </location>
</feature>
<feature type="transmembrane region" description="Helical; Name=5" evidence="1">
    <location>
        <begin position="161"/>
        <end position="181"/>
    </location>
</feature>
<feature type="topological domain" description="Extracellular" evidence="1">
    <location>
        <begin position="182"/>
        <end position="195"/>
    </location>
</feature>
<feature type="transmembrane region" description="Helical; Name=6" evidence="1">
    <location>
        <begin position="196"/>
        <end position="216"/>
    </location>
</feature>
<feature type="topological domain" description="Cytoplasmic" evidence="1">
    <location>
        <begin position="217"/>
        <end position="285"/>
    </location>
</feature>
<feature type="transmembrane region" description="Helical; Name=7" evidence="1">
    <location>
        <begin position="286"/>
        <end position="306"/>
    </location>
</feature>
<feature type="topological domain" description="Extracellular" evidence="1">
    <location>
        <begin position="307"/>
        <end position="327"/>
    </location>
</feature>
<feature type="transmembrane region" description="Helical; Name=8" evidence="1">
    <location>
        <begin position="328"/>
        <end position="349"/>
    </location>
</feature>
<feature type="topological domain" description="Cytoplasmic" evidence="1">
    <location>
        <begin position="350"/>
        <end position="352"/>
    </location>
</feature>
<feature type="transmembrane region" description="Helical; Name=9" evidence="1">
    <location>
        <begin position="353"/>
        <end position="373"/>
    </location>
</feature>
<feature type="topological domain" description="Extracellular" evidence="1">
    <location>
        <begin position="374"/>
        <end position="389"/>
    </location>
</feature>
<feature type="transmembrane region" description="Helical; Name=10" evidence="1">
    <location>
        <begin position="390"/>
        <end position="410"/>
    </location>
</feature>
<feature type="topological domain" description="Cytoplasmic" evidence="1">
    <location>
        <begin position="411"/>
        <end position="435"/>
    </location>
</feature>
<feature type="transmembrane region" description="Helical; Name=11" evidence="1">
    <location>
        <begin position="436"/>
        <end position="456"/>
    </location>
</feature>
<feature type="topological domain" description="Extracellular" evidence="1">
    <location>
        <begin position="457"/>
        <end position="458"/>
    </location>
</feature>
<feature type="transmembrane region" description="Helical; Name=12" evidence="1">
    <location>
        <begin position="459"/>
        <end position="479"/>
    </location>
</feature>
<feature type="topological domain" description="Cytoplasmic" evidence="1">
    <location>
        <begin position="480"/>
        <end position="536"/>
    </location>
</feature>
<feature type="region of interest" description="Disordered" evidence="2">
    <location>
        <begin position="516"/>
        <end position="536"/>
    </location>
</feature>
<feature type="compositionally biased region" description="Basic and acidic residues" evidence="2">
    <location>
        <begin position="516"/>
        <end position="530"/>
    </location>
</feature>
<feature type="glycosylation site" description="N-linked (GlcNAc...) asparagine" evidence="1">
    <location>
        <position position="184"/>
    </location>
</feature>
<organism>
    <name type="scientific">Neurospora africana</name>
    <dbReference type="NCBI Taxonomy" id="5143"/>
    <lineage>
        <taxon>Eukaryota</taxon>
        <taxon>Fungi</taxon>
        <taxon>Dikarya</taxon>
        <taxon>Ascomycota</taxon>
        <taxon>Pezizomycotina</taxon>
        <taxon>Sordariomycetes</taxon>
        <taxon>Sordariomycetidae</taxon>
        <taxon>Sordariales</taxon>
        <taxon>Sordariaceae</taxon>
        <taxon>Neurospora</taxon>
    </lineage>
</organism>
<proteinExistence type="inferred from homology"/>
<reference key="1">
    <citation type="submission" date="2005-04" db="EMBL/GenBank/DDBJ databases">
        <title>Sequence analysis of genes of the quinic acid (qa) cluster of two homothallic Neurospora species.</title>
        <authorList>
            <person name="Arnett D.R."/>
            <person name="Asch D.K."/>
        </authorList>
    </citation>
    <scope>NUCLEOTIDE SEQUENCE [GENOMIC DNA]</scope>
</reference>
<protein>
    <recommendedName>
        <fullName>Quinate permease</fullName>
    </recommendedName>
    <alternativeName>
        <fullName>Quinate transporter</fullName>
    </alternativeName>
</protein>
<name>QAY_NEUAF</name>
<sequence length="536" mass="60073">MTLLALKEDRPTPKAVYNWRVYTCAAIASFASCMIGYDSSFIGTTLALPSFTKEFDFASYTPGALALLQSNIVSVYQAGAFFGSLFAFATSYFLGRRRSLIAFSVVFIIGAAIMLAADGQRRGVDPIIAGRVLAGIGVGGASNMVPIYISELAPPAVRGRLVGIYELGWQIGGLVGFWINYGVNTTMAPTRSQWLIPFAVQLIPAGLLFLGSFWIPESPRWLFANGRREEAIKVLCWIRNLEPTDRYIVEEISYIDADLQRYAREVGKGFWKPFLSLKQPKVRWRFFLGGMLFLWQNGSGINAINYYSPTVFRSIGITGTNTGFLTTGIFGVVKMVLTIIWLLWLVDLVGRRRILFVGATGGSLCMWFIGAYIKIAGPGTTKTEEAKLTSGGIAAIFFFYLWTAFYTPSWNGTPWVINSEMFDQNTRSLGQASAAANNWFWNFIISRFTPQMFIKMEYGVYFFFASLMLLSVVFIYFFIPETKSIPLEAMDRLFAIKSVHNANKILMDELNFDRNPEREQSSLDEKDRVTQTENAV</sequence>
<accession>Q4U3U6</accession>
<keyword id="KW-0325">Glycoprotein</keyword>
<keyword id="KW-0472">Membrane</keyword>
<keyword id="KW-0672">Quinate metabolism</keyword>
<keyword id="KW-0812">Transmembrane</keyword>
<keyword id="KW-1133">Transmembrane helix</keyword>
<keyword id="KW-0813">Transport</keyword>
<dbReference type="EMBL" id="DQ015972">
    <property type="protein sequence ID" value="AAY41161.1"/>
    <property type="molecule type" value="Genomic_DNA"/>
</dbReference>
<dbReference type="SMR" id="Q4U3U6"/>
<dbReference type="GlyCosmos" id="Q4U3U6">
    <property type="glycosylation" value="1 site, No reported glycans"/>
</dbReference>
<dbReference type="GO" id="GO:0016020">
    <property type="term" value="C:membrane"/>
    <property type="evidence" value="ECO:0007669"/>
    <property type="project" value="UniProtKB-SubCell"/>
</dbReference>
<dbReference type="GO" id="GO:0005351">
    <property type="term" value="F:carbohydrate:proton symporter activity"/>
    <property type="evidence" value="ECO:0007669"/>
    <property type="project" value="TreeGrafter"/>
</dbReference>
<dbReference type="GO" id="GO:0019630">
    <property type="term" value="P:quinate metabolic process"/>
    <property type="evidence" value="ECO:0007669"/>
    <property type="project" value="UniProtKB-KW"/>
</dbReference>
<dbReference type="CDD" id="cd17356">
    <property type="entry name" value="MFS_HXT"/>
    <property type="match status" value="1"/>
</dbReference>
<dbReference type="FunFam" id="1.20.1250.20:FF:000026">
    <property type="entry name" value="MFS quinate transporter QutD"/>
    <property type="match status" value="1"/>
</dbReference>
<dbReference type="Gene3D" id="1.20.1250.20">
    <property type="entry name" value="MFS general substrate transporter like domains"/>
    <property type="match status" value="1"/>
</dbReference>
<dbReference type="InterPro" id="IPR020846">
    <property type="entry name" value="MFS_dom"/>
</dbReference>
<dbReference type="InterPro" id="IPR005828">
    <property type="entry name" value="MFS_sugar_transport-like"/>
</dbReference>
<dbReference type="InterPro" id="IPR050360">
    <property type="entry name" value="MFS_Sugar_Transporters"/>
</dbReference>
<dbReference type="InterPro" id="IPR036259">
    <property type="entry name" value="MFS_trans_sf"/>
</dbReference>
<dbReference type="InterPro" id="IPR003663">
    <property type="entry name" value="Sugar/inositol_transpt"/>
</dbReference>
<dbReference type="InterPro" id="IPR005829">
    <property type="entry name" value="Sugar_transporter_CS"/>
</dbReference>
<dbReference type="NCBIfam" id="TIGR00879">
    <property type="entry name" value="SP"/>
    <property type="match status" value="1"/>
</dbReference>
<dbReference type="PANTHER" id="PTHR48022:SF34">
    <property type="entry name" value="MAJOR FACILITATOR SUPERFAMILY (MFS) PROFILE DOMAIN-CONTAINING PROTEIN-RELATED"/>
    <property type="match status" value="1"/>
</dbReference>
<dbReference type="PANTHER" id="PTHR48022">
    <property type="entry name" value="PLASTIDIC GLUCOSE TRANSPORTER 4"/>
    <property type="match status" value="1"/>
</dbReference>
<dbReference type="Pfam" id="PF00083">
    <property type="entry name" value="Sugar_tr"/>
    <property type="match status" value="1"/>
</dbReference>
<dbReference type="PRINTS" id="PR00171">
    <property type="entry name" value="SUGRTRNSPORT"/>
</dbReference>
<dbReference type="SUPFAM" id="SSF103473">
    <property type="entry name" value="MFS general substrate transporter"/>
    <property type="match status" value="1"/>
</dbReference>
<dbReference type="PROSITE" id="PS50850">
    <property type="entry name" value="MFS"/>
    <property type="match status" value="1"/>
</dbReference>
<dbReference type="PROSITE" id="PS00216">
    <property type="entry name" value="SUGAR_TRANSPORT_1"/>
    <property type="match status" value="1"/>
</dbReference>
<dbReference type="PROSITE" id="PS00217">
    <property type="entry name" value="SUGAR_TRANSPORT_2"/>
    <property type="match status" value="1"/>
</dbReference>
<evidence type="ECO:0000255" key="1"/>
<evidence type="ECO:0000256" key="2">
    <source>
        <dbReference type="SAM" id="MobiDB-lite"/>
    </source>
</evidence>
<evidence type="ECO:0000305" key="3"/>
<comment type="subcellular location">
    <subcellularLocation>
        <location>Membrane</location>
        <topology>Multi-pass membrane protein</topology>
    </subcellularLocation>
</comment>
<comment type="similarity">
    <text evidence="3">Belongs to the major facilitator superfamily. Sugar transporter (TC 2.A.1.1) family.</text>
</comment>